<evidence type="ECO:0000269" key="1">
    <source>
    </source>
</evidence>
<evidence type="ECO:0000269" key="2">
    <source>
    </source>
</evidence>
<evidence type="ECO:0000305" key="3"/>
<feature type="chain" id="PRO_0000287026" description="Cyclin-D3-3">
    <location>
        <begin position="1"/>
        <end position="361"/>
    </location>
</feature>
<accession>Q9SN11</accession>
<organism>
    <name type="scientific">Arabidopsis thaliana</name>
    <name type="common">Mouse-ear cress</name>
    <dbReference type="NCBI Taxonomy" id="3702"/>
    <lineage>
        <taxon>Eukaryota</taxon>
        <taxon>Viridiplantae</taxon>
        <taxon>Streptophyta</taxon>
        <taxon>Embryophyta</taxon>
        <taxon>Tracheophyta</taxon>
        <taxon>Spermatophyta</taxon>
        <taxon>Magnoliopsida</taxon>
        <taxon>eudicotyledons</taxon>
        <taxon>Gunneridae</taxon>
        <taxon>Pentapetalae</taxon>
        <taxon>rosids</taxon>
        <taxon>malvids</taxon>
        <taxon>Brassicales</taxon>
        <taxon>Brassicaceae</taxon>
        <taxon>Camelineae</taxon>
        <taxon>Arabidopsis</taxon>
    </lineage>
</organism>
<gene>
    <name type="primary">CYCD3-3</name>
    <name type="ordered locus">At3g50070</name>
    <name type="ORF">F3A4.150</name>
</gene>
<keyword id="KW-0131">Cell cycle</keyword>
<keyword id="KW-0132">Cell division</keyword>
<keyword id="KW-0195">Cyclin</keyword>
<keyword id="KW-1185">Reference proteome</keyword>
<name>CCD33_ARATH</name>
<reference key="1">
    <citation type="journal article" date="2000" name="Nature">
        <title>Sequence and analysis of chromosome 3 of the plant Arabidopsis thaliana.</title>
        <authorList>
            <person name="Salanoubat M."/>
            <person name="Lemcke K."/>
            <person name="Rieger M."/>
            <person name="Ansorge W."/>
            <person name="Unseld M."/>
            <person name="Fartmann B."/>
            <person name="Valle G."/>
            <person name="Bloecker H."/>
            <person name="Perez-Alonso M."/>
            <person name="Obermaier B."/>
            <person name="Delseny M."/>
            <person name="Boutry M."/>
            <person name="Grivell L.A."/>
            <person name="Mache R."/>
            <person name="Puigdomenech P."/>
            <person name="De Simone V."/>
            <person name="Choisne N."/>
            <person name="Artiguenave F."/>
            <person name="Robert C."/>
            <person name="Brottier P."/>
            <person name="Wincker P."/>
            <person name="Cattolico L."/>
            <person name="Weissenbach J."/>
            <person name="Saurin W."/>
            <person name="Quetier F."/>
            <person name="Schaefer M."/>
            <person name="Mueller-Auer S."/>
            <person name="Gabel C."/>
            <person name="Fuchs M."/>
            <person name="Benes V."/>
            <person name="Wurmbach E."/>
            <person name="Drzonek H."/>
            <person name="Erfle H."/>
            <person name="Jordan N."/>
            <person name="Bangert S."/>
            <person name="Wiedelmann R."/>
            <person name="Kranz H."/>
            <person name="Voss H."/>
            <person name="Holland R."/>
            <person name="Brandt P."/>
            <person name="Nyakatura G."/>
            <person name="Vezzi A."/>
            <person name="D'Angelo M."/>
            <person name="Pallavicini A."/>
            <person name="Toppo S."/>
            <person name="Simionati B."/>
            <person name="Conrad A."/>
            <person name="Hornischer K."/>
            <person name="Kauer G."/>
            <person name="Loehnert T.-H."/>
            <person name="Nordsiek G."/>
            <person name="Reichelt J."/>
            <person name="Scharfe M."/>
            <person name="Schoen O."/>
            <person name="Bargues M."/>
            <person name="Terol J."/>
            <person name="Climent J."/>
            <person name="Navarro P."/>
            <person name="Collado C."/>
            <person name="Perez-Perez A."/>
            <person name="Ottenwaelder B."/>
            <person name="Duchemin D."/>
            <person name="Cooke R."/>
            <person name="Laudie M."/>
            <person name="Berger-Llauro C."/>
            <person name="Purnelle B."/>
            <person name="Masuy D."/>
            <person name="de Haan M."/>
            <person name="Maarse A.C."/>
            <person name="Alcaraz J.-P."/>
            <person name="Cottet A."/>
            <person name="Casacuberta E."/>
            <person name="Monfort A."/>
            <person name="Argiriou A."/>
            <person name="Flores M."/>
            <person name="Liguori R."/>
            <person name="Vitale D."/>
            <person name="Mannhaupt G."/>
            <person name="Haase D."/>
            <person name="Schoof H."/>
            <person name="Rudd S."/>
            <person name="Zaccaria P."/>
            <person name="Mewes H.-W."/>
            <person name="Mayer K.F.X."/>
            <person name="Kaul S."/>
            <person name="Town C.D."/>
            <person name="Koo H.L."/>
            <person name="Tallon L.J."/>
            <person name="Jenkins J."/>
            <person name="Rooney T."/>
            <person name="Rizzo M."/>
            <person name="Walts A."/>
            <person name="Utterback T."/>
            <person name="Fujii C.Y."/>
            <person name="Shea T.P."/>
            <person name="Creasy T.H."/>
            <person name="Haas B."/>
            <person name="Maiti R."/>
            <person name="Wu D."/>
            <person name="Peterson J."/>
            <person name="Van Aken S."/>
            <person name="Pai G."/>
            <person name="Militscher J."/>
            <person name="Sellers P."/>
            <person name="Gill J.E."/>
            <person name="Feldblyum T.V."/>
            <person name="Preuss D."/>
            <person name="Lin X."/>
            <person name="Nierman W.C."/>
            <person name="Salzberg S.L."/>
            <person name="White O."/>
            <person name="Venter J.C."/>
            <person name="Fraser C.M."/>
            <person name="Kaneko T."/>
            <person name="Nakamura Y."/>
            <person name="Sato S."/>
            <person name="Kato T."/>
            <person name="Asamizu E."/>
            <person name="Sasamoto S."/>
            <person name="Kimura T."/>
            <person name="Idesawa K."/>
            <person name="Kawashima K."/>
            <person name="Kishida Y."/>
            <person name="Kiyokawa C."/>
            <person name="Kohara M."/>
            <person name="Matsumoto M."/>
            <person name="Matsuno A."/>
            <person name="Muraki A."/>
            <person name="Nakayama S."/>
            <person name="Nakazaki N."/>
            <person name="Shinpo S."/>
            <person name="Takeuchi C."/>
            <person name="Wada T."/>
            <person name="Watanabe A."/>
            <person name="Yamada M."/>
            <person name="Yasuda M."/>
            <person name="Tabata S."/>
        </authorList>
    </citation>
    <scope>NUCLEOTIDE SEQUENCE [LARGE SCALE GENOMIC DNA]</scope>
    <source>
        <strain>cv. Columbia</strain>
    </source>
</reference>
<reference key="2">
    <citation type="journal article" date="2017" name="Plant J.">
        <title>Araport11: a complete reannotation of the Arabidopsis thaliana reference genome.</title>
        <authorList>
            <person name="Cheng C.Y."/>
            <person name="Krishnakumar V."/>
            <person name="Chan A.P."/>
            <person name="Thibaud-Nissen F."/>
            <person name="Schobel S."/>
            <person name="Town C.D."/>
        </authorList>
    </citation>
    <scope>GENOME REANNOTATION</scope>
    <source>
        <strain>cv. Columbia</strain>
    </source>
</reference>
<reference key="3">
    <citation type="journal article" date="2003" name="Science">
        <title>Empirical analysis of transcriptional activity in the Arabidopsis genome.</title>
        <authorList>
            <person name="Yamada K."/>
            <person name="Lim J."/>
            <person name="Dale J.M."/>
            <person name="Chen H."/>
            <person name="Shinn P."/>
            <person name="Palm C.J."/>
            <person name="Southwick A.M."/>
            <person name="Wu H.C."/>
            <person name="Kim C.J."/>
            <person name="Nguyen M."/>
            <person name="Pham P.K."/>
            <person name="Cheuk R.F."/>
            <person name="Karlin-Newmann G."/>
            <person name="Liu S.X."/>
            <person name="Lam B."/>
            <person name="Sakano H."/>
            <person name="Wu T."/>
            <person name="Yu G."/>
            <person name="Miranda M."/>
            <person name="Quach H.L."/>
            <person name="Tripp M."/>
            <person name="Chang C.H."/>
            <person name="Lee J.M."/>
            <person name="Toriumi M.J."/>
            <person name="Chan M.M."/>
            <person name="Tang C.C."/>
            <person name="Onodera C.S."/>
            <person name="Deng J.M."/>
            <person name="Akiyama K."/>
            <person name="Ansari Y."/>
            <person name="Arakawa T."/>
            <person name="Banh J."/>
            <person name="Banno F."/>
            <person name="Bowser L."/>
            <person name="Brooks S.Y."/>
            <person name="Carninci P."/>
            <person name="Chao Q."/>
            <person name="Choy N."/>
            <person name="Enju A."/>
            <person name="Goldsmith A.D."/>
            <person name="Gurjal M."/>
            <person name="Hansen N.F."/>
            <person name="Hayashizaki Y."/>
            <person name="Johnson-Hopson C."/>
            <person name="Hsuan V.W."/>
            <person name="Iida K."/>
            <person name="Karnes M."/>
            <person name="Khan S."/>
            <person name="Koesema E."/>
            <person name="Ishida J."/>
            <person name="Jiang P.X."/>
            <person name="Jones T."/>
            <person name="Kawai J."/>
            <person name="Kamiya A."/>
            <person name="Meyers C."/>
            <person name="Nakajima M."/>
            <person name="Narusaka M."/>
            <person name="Seki M."/>
            <person name="Sakurai T."/>
            <person name="Satou M."/>
            <person name="Tamse R."/>
            <person name="Vaysberg M."/>
            <person name="Wallender E.K."/>
            <person name="Wong C."/>
            <person name="Yamamura Y."/>
            <person name="Yuan S."/>
            <person name="Shinozaki K."/>
            <person name="Davis R.W."/>
            <person name="Theologis A."/>
            <person name="Ecker J.R."/>
        </authorList>
    </citation>
    <scope>NUCLEOTIDE SEQUENCE [LARGE SCALE MRNA]</scope>
    <source>
        <strain>cv. Columbia</strain>
    </source>
</reference>
<reference key="4">
    <citation type="submission" date="2002-03" db="EMBL/GenBank/DDBJ databases">
        <title>Full-length cDNA from Arabidopsis thaliana.</title>
        <authorList>
            <person name="Brover V.V."/>
            <person name="Troukhan M.E."/>
            <person name="Alexandrov N.A."/>
            <person name="Lu Y.-P."/>
            <person name="Flavell R.B."/>
            <person name="Feldmann K.A."/>
        </authorList>
    </citation>
    <scope>NUCLEOTIDE SEQUENCE [LARGE SCALE MRNA]</scope>
</reference>
<reference key="5">
    <citation type="journal article" date="2004" name="Plant Physiol.">
        <title>Genome-wide analysis of the cyclin family in Arabidopsis and comparative phylogenetic analysis of plant cyclin-like proteins.</title>
        <authorList>
            <person name="Wang G."/>
            <person name="Kong H."/>
            <person name="Sun Y."/>
            <person name="Zhang X."/>
            <person name="Zhang W."/>
            <person name="Altman N."/>
            <person name="dePamphilis C.W."/>
            <person name="Ma H."/>
        </authorList>
    </citation>
    <scope>GENE FAMILY</scope>
    <scope>NOMENCLATURE</scope>
</reference>
<reference key="6">
    <citation type="journal article" date="2013" name="Plant Physiol.">
        <title>EBE, an AP2/ERF transcription factor highly expressed in proliferating cells, affects shoot architecture in Arabidopsis.</title>
        <authorList>
            <person name="Mehrnia M."/>
            <person name="Balazadeh S."/>
            <person name="Zanor M.I."/>
            <person name="Mueller-Roeber B."/>
        </authorList>
    </citation>
    <scope>INDUCTION BY ERF114</scope>
</reference>
<reference key="7">
    <citation type="journal article" date="2014" name="J. Exp. Bot.">
        <title>Requirement for A-type cyclin-dependent kinase and cyclins for the terminal division in the stomatal lineage of Arabidopsis.</title>
        <authorList>
            <person name="Yang K."/>
            <person name="Wang H."/>
            <person name="Xue S."/>
            <person name="Qu X."/>
            <person name="Zou J."/>
            <person name="Le J."/>
        </authorList>
    </citation>
    <scope>FUNCTION</scope>
    <source>
        <strain>cv. Columbia</strain>
    </source>
</reference>
<proteinExistence type="evidence at transcript level"/>
<dbReference type="EMBL" id="AL132978">
    <property type="protein sequence ID" value="CAB62115.1"/>
    <property type="molecule type" value="Genomic_DNA"/>
</dbReference>
<dbReference type="EMBL" id="CP002686">
    <property type="protein sequence ID" value="AEE78623.1"/>
    <property type="molecule type" value="Genomic_DNA"/>
</dbReference>
<dbReference type="EMBL" id="AY052665">
    <property type="protein sequence ID" value="AAK96569.1"/>
    <property type="molecule type" value="mRNA"/>
</dbReference>
<dbReference type="EMBL" id="AY063729">
    <property type="protein sequence ID" value="AAL36079.1"/>
    <property type="molecule type" value="mRNA"/>
</dbReference>
<dbReference type="EMBL" id="AY087498">
    <property type="protein sequence ID" value="AAM65041.1"/>
    <property type="molecule type" value="mRNA"/>
</dbReference>
<dbReference type="PIR" id="T45860">
    <property type="entry name" value="T45860"/>
</dbReference>
<dbReference type="SMR" id="Q9SN11"/>
<dbReference type="BioGRID" id="9487">
    <property type="interactions" value="18"/>
</dbReference>
<dbReference type="FunCoup" id="Q9SN11">
    <property type="interactions" value="1031"/>
</dbReference>
<dbReference type="IntAct" id="Q9SN11">
    <property type="interactions" value="10"/>
</dbReference>
<dbReference type="STRING" id="3702.Q9SN11"/>
<dbReference type="PaxDb" id="3702-AT3G50070.1"/>
<dbReference type="EnsemblPlants" id="AT3G50070.1">
    <property type="protein sequence ID" value="AT3G50070.1"/>
    <property type="gene ID" value="AT3G50070"/>
</dbReference>
<dbReference type="Gramene" id="AT3G50070.1">
    <property type="protein sequence ID" value="AT3G50070.1"/>
    <property type="gene ID" value="AT3G50070"/>
</dbReference>
<dbReference type="KEGG" id="ath:AT3G50070"/>
<dbReference type="Araport" id="AT3G50070"/>
<dbReference type="TAIR" id="AT3G50070">
    <property type="gene designation" value="CYCD3"/>
</dbReference>
<dbReference type="eggNOG" id="KOG0656">
    <property type="taxonomic scope" value="Eukaryota"/>
</dbReference>
<dbReference type="HOGENOM" id="CLU_048040_0_0_1"/>
<dbReference type="InParanoid" id="Q9SN11"/>
<dbReference type="OMA" id="RYSFKSH"/>
<dbReference type="OrthoDB" id="5590282at2759"/>
<dbReference type="PhylomeDB" id="Q9SN11"/>
<dbReference type="PRO" id="PR:Q9SN11"/>
<dbReference type="Proteomes" id="UP000006548">
    <property type="component" value="Chromosome 3"/>
</dbReference>
<dbReference type="ExpressionAtlas" id="Q9SN11">
    <property type="expression patterns" value="baseline and differential"/>
</dbReference>
<dbReference type="GO" id="GO:0051301">
    <property type="term" value="P:cell division"/>
    <property type="evidence" value="ECO:0007669"/>
    <property type="project" value="UniProtKB-KW"/>
</dbReference>
<dbReference type="GO" id="GO:0010444">
    <property type="term" value="P:guard mother cell differentiation"/>
    <property type="evidence" value="ECO:0000315"/>
    <property type="project" value="UniProtKB"/>
</dbReference>
<dbReference type="GO" id="GO:0048316">
    <property type="term" value="P:seed development"/>
    <property type="evidence" value="ECO:0000316"/>
    <property type="project" value="TAIR"/>
</dbReference>
<dbReference type="CDD" id="cd20543">
    <property type="entry name" value="CYCLIN_AtCycD-like_rpt1"/>
    <property type="match status" value="1"/>
</dbReference>
<dbReference type="CDD" id="cd20544">
    <property type="entry name" value="CYCLIN_AtCycD-like_rpt2"/>
    <property type="match status" value="1"/>
</dbReference>
<dbReference type="FunFam" id="1.10.472.10:FF:000070">
    <property type="entry name" value="CYCLIN D32"/>
    <property type="match status" value="1"/>
</dbReference>
<dbReference type="FunFam" id="1.10.472.10:FF:000074">
    <property type="entry name" value="D3-type cyclin"/>
    <property type="match status" value="1"/>
</dbReference>
<dbReference type="Gene3D" id="1.10.472.10">
    <property type="entry name" value="Cyclin-like"/>
    <property type="match status" value="2"/>
</dbReference>
<dbReference type="InterPro" id="IPR039361">
    <property type="entry name" value="Cyclin"/>
</dbReference>
<dbReference type="InterPro" id="IPR013763">
    <property type="entry name" value="Cyclin-like_dom"/>
</dbReference>
<dbReference type="InterPro" id="IPR036915">
    <property type="entry name" value="Cyclin-like_sf"/>
</dbReference>
<dbReference type="InterPro" id="IPR004367">
    <property type="entry name" value="Cyclin_C-dom"/>
</dbReference>
<dbReference type="InterPro" id="IPR006671">
    <property type="entry name" value="Cyclin_N"/>
</dbReference>
<dbReference type="InterPro" id="IPR048258">
    <property type="entry name" value="Cyclins_cyclin-box"/>
</dbReference>
<dbReference type="PANTHER" id="PTHR10177">
    <property type="entry name" value="CYCLINS"/>
    <property type="match status" value="1"/>
</dbReference>
<dbReference type="Pfam" id="PF02984">
    <property type="entry name" value="Cyclin_C"/>
    <property type="match status" value="1"/>
</dbReference>
<dbReference type="Pfam" id="PF00134">
    <property type="entry name" value="Cyclin_N"/>
    <property type="match status" value="1"/>
</dbReference>
<dbReference type="SMART" id="SM00385">
    <property type="entry name" value="CYCLIN"/>
    <property type="match status" value="1"/>
</dbReference>
<dbReference type="SMART" id="SM01332">
    <property type="entry name" value="Cyclin_C"/>
    <property type="match status" value="1"/>
</dbReference>
<dbReference type="SUPFAM" id="SSF47954">
    <property type="entry name" value="Cyclin-like"/>
    <property type="match status" value="1"/>
</dbReference>
<dbReference type="PROSITE" id="PS00292">
    <property type="entry name" value="CYCLINS"/>
    <property type="match status" value="1"/>
</dbReference>
<sequence>MALEEEEESQNAPFCVLDGLFCEEESEFHEQVDLCDESVEKFPFLNLGLSDHDMLWDDDELSTLISKQEPCLYDEILDDEFLVLCREKALDWIFKVKSHYGFNSLTALLAVNYFDRFITSRKFQTDKPWMSQLTALACLSLAAKVEEIRVPFLLDFQVEEARYVFEAKTIQRMELLVLSTLDWRMHPVTPISFFDHIIRRYSFKSHHQLEFLSRCESLLLSIIPDSRFLSFSPSVLATAIMVSVIRDLKMCDEAVYQSQLMTLLKVDSEKVNKCYELVLDHSPSKKRMMNWMQQPASPIGVFDASFSSDSSNESWVVSASASVSSSPSSEPLLKRRRVQEQQMRLSSINRMFFDVLSSSPR</sequence>
<comment type="function">
    <text evidence="2">Promotes divisions in the guard cells (GCs) after the guard mother cells (GMC) symmetric division.</text>
</comment>
<comment type="induction">
    <text evidence="1">Up-regulated by the transcription factor ERF114.</text>
</comment>
<comment type="similarity">
    <text evidence="3">Belongs to the cyclin family. Cyclin D subfamily.</text>
</comment>
<protein>
    <recommendedName>
        <fullName>Cyclin-D3-3</fullName>
    </recommendedName>
    <alternativeName>
        <fullName>G1/S-specific cyclin-D3-3</fullName>
        <shortName>CycD3;3</shortName>
    </alternativeName>
</protein>